<keyword id="KW-0255">Endonuclease</keyword>
<keyword id="KW-0378">Hydrolase</keyword>
<keyword id="KW-0540">Nuclease</keyword>
<keyword id="KW-0694">RNA-binding</keyword>
<keyword id="KW-0699">rRNA-binding</keyword>
<name>SMRB_ECOSE</name>
<feature type="chain" id="PRO_1000136041" description="Ribosome rescue factor SmrB">
    <location>
        <begin position="1"/>
        <end position="183"/>
    </location>
</feature>
<feature type="domain" description="Smr" evidence="1">
    <location>
        <begin position="98"/>
        <end position="173"/>
    </location>
</feature>
<accession>B6I4X8</accession>
<sequence>MKKKTTLSEEDQALFRQLMAGTRKIKQDTIVHRPQRKKISEVPVKRLIQEQADASHYFSDEFQPLLNTEGPVKYVRPDVSHFEAKKLRRGDYSPELFLDLHGLTQLQAKQELGALIAACRREHVFCACVMHGHGKHILKQQTPLWLAQHPHVMAFHQAPKEYGGDAALLVLIEVEEWLPPELP</sequence>
<proteinExistence type="inferred from homology"/>
<organism>
    <name type="scientific">Escherichia coli (strain SE11)</name>
    <dbReference type="NCBI Taxonomy" id="409438"/>
    <lineage>
        <taxon>Bacteria</taxon>
        <taxon>Pseudomonadati</taxon>
        <taxon>Pseudomonadota</taxon>
        <taxon>Gammaproteobacteria</taxon>
        <taxon>Enterobacterales</taxon>
        <taxon>Enterobacteriaceae</taxon>
        <taxon>Escherichia</taxon>
    </lineage>
</organism>
<comment type="function">
    <text evidence="1">Acts as a ribosome collision sensor. Detects stalled/collided disomes (pairs of ribosomes where the leading ribosome is stalled and a second ribosome has collided with it) and endonucleolytically cleaves mRNA at the 5' boundary of the stalled ribosome. Stalled/collided disomes form a new interface (primarily via the 30S subunits) that binds SmrB. Cleaved mRNA becomes available for tmRNA ligation, leading to ribosomal subunit dissociation and rescue of stalled ribosomes.</text>
</comment>
<comment type="subunit">
    <text evidence="1">Associates with collided ribosomes, but not with correctly translating polysomes.</text>
</comment>
<comment type="similarity">
    <text evidence="1">Belongs to the SmrB family.</text>
</comment>
<reference key="1">
    <citation type="journal article" date="2008" name="DNA Res.">
        <title>Complete genome sequence and comparative analysis of the wild-type commensal Escherichia coli strain SE11 isolated from a healthy adult.</title>
        <authorList>
            <person name="Oshima K."/>
            <person name="Toh H."/>
            <person name="Ogura Y."/>
            <person name="Sasamoto H."/>
            <person name="Morita H."/>
            <person name="Park S.-H."/>
            <person name="Ooka T."/>
            <person name="Iyoda S."/>
            <person name="Taylor T.D."/>
            <person name="Hayashi T."/>
            <person name="Itoh K."/>
            <person name="Hattori M."/>
        </authorList>
    </citation>
    <scope>NUCLEOTIDE SEQUENCE [LARGE SCALE GENOMIC DNA]</scope>
    <source>
        <strain>SE11</strain>
    </source>
</reference>
<gene>
    <name evidence="1" type="primary">smrB</name>
    <name type="ordered locus">ECSE_2640</name>
</gene>
<evidence type="ECO:0000255" key="1">
    <source>
        <dbReference type="HAMAP-Rule" id="MF_01042"/>
    </source>
</evidence>
<protein>
    <recommendedName>
        <fullName evidence="1">Ribosome rescue factor SmrB</fullName>
        <ecNumber evidence="1">3.1.-.-</ecNumber>
    </recommendedName>
</protein>
<dbReference type="EC" id="3.1.-.-" evidence="1"/>
<dbReference type="EMBL" id="AP009240">
    <property type="protein sequence ID" value="BAG78164.1"/>
    <property type="molecule type" value="Genomic_DNA"/>
</dbReference>
<dbReference type="RefSeq" id="WP_000730806.1">
    <property type="nucleotide sequence ID" value="NC_011415.1"/>
</dbReference>
<dbReference type="SMR" id="B6I4X8"/>
<dbReference type="GeneID" id="93774844"/>
<dbReference type="KEGG" id="ecy:ECSE_2640"/>
<dbReference type="HOGENOM" id="CLU_055978_4_0_6"/>
<dbReference type="Proteomes" id="UP000008199">
    <property type="component" value="Chromosome"/>
</dbReference>
<dbReference type="GO" id="GO:0004521">
    <property type="term" value="F:RNA endonuclease activity"/>
    <property type="evidence" value="ECO:0007669"/>
    <property type="project" value="UniProtKB-UniRule"/>
</dbReference>
<dbReference type="GO" id="GO:0019843">
    <property type="term" value="F:rRNA binding"/>
    <property type="evidence" value="ECO:0007669"/>
    <property type="project" value="UniProtKB-UniRule"/>
</dbReference>
<dbReference type="GO" id="GO:0072344">
    <property type="term" value="P:rescue of stalled ribosome"/>
    <property type="evidence" value="ECO:0007669"/>
    <property type="project" value="UniProtKB-UniRule"/>
</dbReference>
<dbReference type="Gene3D" id="3.30.1370.110">
    <property type="match status" value="1"/>
</dbReference>
<dbReference type="HAMAP" id="MF_01042">
    <property type="entry name" value="SmrB"/>
    <property type="match status" value="1"/>
</dbReference>
<dbReference type="InterPro" id="IPR002625">
    <property type="entry name" value="Smr_dom"/>
</dbReference>
<dbReference type="InterPro" id="IPR036063">
    <property type="entry name" value="Smr_dom_sf"/>
</dbReference>
<dbReference type="InterPro" id="IPR022990">
    <property type="entry name" value="SmrB-like"/>
</dbReference>
<dbReference type="NCBIfam" id="NF003432">
    <property type="entry name" value="PRK04946.1"/>
    <property type="match status" value="1"/>
</dbReference>
<dbReference type="PANTHER" id="PTHR35562">
    <property type="entry name" value="DNA ENDONUCLEASE SMRA-RELATED"/>
    <property type="match status" value="1"/>
</dbReference>
<dbReference type="PANTHER" id="PTHR35562:SF1">
    <property type="entry name" value="UPF0115 PROTEIN YFCN"/>
    <property type="match status" value="1"/>
</dbReference>
<dbReference type="Pfam" id="PF01713">
    <property type="entry name" value="Smr"/>
    <property type="match status" value="1"/>
</dbReference>
<dbReference type="SMART" id="SM00463">
    <property type="entry name" value="SMR"/>
    <property type="match status" value="1"/>
</dbReference>
<dbReference type="SUPFAM" id="SSF160443">
    <property type="entry name" value="SMR domain-like"/>
    <property type="match status" value="1"/>
</dbReference>
<dbReference type="PROSITE" id="PS50828">
    <property type="entry name" value="SMR"/>
    <property type="match status" value="1"/>
</dbReference>